<proteinExistence type="inferred from homology"/>
<reference key="1">
    <citation type="journal article" date="2009" name="J. Bacteriol.">
        <title>Complete genome sequence of Macrococcus caseolyticus strain JCSCS5402, reflecting the ancestral genome of the human-pathogenic staphylococci.</title>
        <authorList>
            <person name="Baba T."/>
            <person name="Kuwahara-Arai K."/>
            <person name="Uchiyama I."/>
            <person name="Takeuchi F."/>
            <person name="Ito T."/>
            <person name="Hiramatsu K."/>
        </authorList>
    </citation>
    <scope>NUCLEOTIDE SEQUENCE [LARGE SCALE GENOMIC DNA]</scope>
    <source>
        <strain>JCSC5402</strain>
    </source>
</reference>
<dbReference type="EMBL" id="AP009484">
    <property type="protein sequence ID" value="BAH18479.1"/>
    <property type="molecule type" value="Genomic_DNA"/>
</dbReference>
<dbReference type="RefSeq" id="WP_015912271.1">
    <property type="nucleotide sequence ID" value="NC_011999.1"/>
</dbReference>
<dbReference type="SMR" id="B9E8G1"/>
<dbReference type="STRING" id="458233.MCCL_1772"/>
<dbReference type="KEGG" id="mcl:MCCL_1772"/>
<dbReference type="eggNOG" id="COG0216">
    <property type="taxonomic scope" value="Bacteria"/>
</dbReference>
<dbReference type="HOGENOM" id="CLU_036856_0_1_9"/>
<dbReference type="OrthoDB" id="9806673at2"/>
<dbReference type="Proteomes" id="UP000001383">
    <property type="component" value="Chromosome"/>
</dbReference>
<dbReference type="GO" id="GO:0005737">
    <property type="term" value="C:cytoplasm"/>
    <property type="evidence" value="ECO:0007669"/>
    <property type="project" value="UniProtKB-SubCell"/>
</dbReference>
<dbReference type="GO" id="GO:0016149">
    <property type="term" value="F:translation release factor activity, codon specific"/>
    <property type="evidence" value="ECO:0007669"/>
    <property type="project" value="UniProtKB-UniRule"/>
</dbReference>
<dbReference type="FunFam" id="3.30.160.20:FF:000004">
    <property type="entry name" value="Peptide chain release factor 1"/>
    <property type="match status" value="1"/>
</dbReference>
<dbReference type="FunFam" id="3.30.70.1660:FF:000002">
    <property type="entry name" value="Peptide chain release factor 1"/>
    <property type="match status" value="1"/>
</dbReference>
<dbReference type="FunFam" id="3.30.70.1660:FF:000004">
    <property type="entry name" value="Peptide chain release factor 1"/>
    <property type="match status" value="1"/>
</dbReference>
<dbReference type="Gene3D" id="3.30.160.20">
    <property type="match status" value="1"/>
</dbReference>
<dbReference type="Gene3D" id="3.30.70.1660">
    <property type="match status" value="1"/>
</dbReference>
<dbReference type="Gene3D" id="6.10.140.1950">
    <property type="match status" value="1"/>
</dbReference>
<dbReference type="HAMAP" id="MF_00093">
    <property type="entry name" value="Rel_fac_1"/>
    <property type="match status" value="1"/>
</dbReference>
<dbReference type="InterPro" id="IPR005139">
    <property type="entry name" value="PCRF"/>
</dbReference>
<dbReference type="InterPro" id="IPR000352">
    <property type="entry name" value="Pep_chain_release_fac_I"/>
</dbReference>
<dbReference type="InterPro" id="IPR045853">
    <property type="entry name" value="Pep_chain_release_fac_I_sf"/>
</dbReference>
<dbReference type="InterPro" id="IPR050057">
    <property type="entry name" value="Prokaryotic/Mito_RF"/>
</dbReference>
<dbReference type="InterPro" id="IPR004373">
    <property type="entry name" value="RF-1"/>
</dbReference>
<dbReference type="NCBIfam" id="TIGR00019">
    <property type="entry name" value="prfA"/>
    <property type="match status" value="1"/>
</dbReference>
<dbReference type="NCBIfam" id="NF001859">
    <property type="entry name" value="PRK00591.1"/>
    <property type="match status" value="1"/>
</dbReference>
<dbReference type="PANTHER" id="PTHR43804">
    <property type="entry name" value="LD18447P"/>
    <property type="match status" value="1"/>
</dbReference>
<dbReference type="PANTHER" id="PTHR43804:SF7">
    <property type="entry name" value="LD18447P"/>
    <property type="match status" value="1"/>
</dbReference>
<dbReference type="Pfam" id="PF03462">
    <property type="entry name" value="PCRF"/>
    <property type="match status" value="1"/>
</dbReference>
<dbReference type="Pfam" id="PF00472">
    <property type="entry name" value="RF-1"/>
    <property type="match status" value="1"/>
</dbReference>
<dbReference type="SMART" id="SM00937">
    <property type="entry name" value="PCRF"/>
    <property type="match status" value="1"/>
</dbReference>
<dbReference type="SUPFAM" id="SSF75620">
    <property type="entry name" value="Release factor"/>
    <property type="match status" value="1"/>
</dbReference>
<dbReference type="PROSITE" id="PS00745">
    <property type="entry name" value="RF_PROK_I"/>
    <property type="match status" value="1"/>
</dbReference>
<gene>
    <name evidence="1" type="primary">prfA</name>
    <name type="ordered locus">MCCL_1772</name>
</gene>
<accession>B9E8G1</accession>
<keyword id="KW-0963">Cytoplasm</keyword>
<keyword id="KW-0488">Methylation</keyword>
<keyword id="KW-0648">Protein biosynthesis</keyword>
<keyword id="KW-1185">Reference proteome</keyword>
<name>RF1_MACCJ</name>
<feature type="chain" id="PRO_1000193494" description="Peptide chain release factor 1">
    <location>
        <begin position="1"/>
        <end position="358"/>
    </location>
</feature>
<feature type="modified residue" description="N5-methylglutamine" evidence="1">
    <location>
        <position position="233"/>
    </location>
</feature>
<comment type="function">
    <text evidence="1">Peptide chain release factor 1 directs the termination of translation in response to the peptide chain termination codons UAG and UAA.</text>
</comment>
<comment type="subcellular location">
    <subcellularLocation>
        <location evidence="1">Cytoplasm</location>
    </subcellularLocation>
</comment>
<comment type="PTM">
    <text evidence="1">Methylated by PrmC. Methylation increases the termination efficiency of RF1.</text>
</comment>
<comment type="similarity">
    <text evidence="1">Belongs to the prokaryotic/mitochondrial release factor family.</text>
</comment>
<protein>
    <recommendedName>
        <fullName evidence="1">Peptide chain release factor 1</fullName>
        <shortName evidence="1">RF-1</shortName>
    </recommendedName>
</protein>
<sequence>MFDQLEIVEQRYEQLNELLSDPDIVSDTDKLREYSKEQADLQETVEVYREYKEVKQQLEEALEMMGEASDADEQEMIKEEINTLKPQIPELEERMKLLLIPKDPMDDKNVVMEIRGAAGGDEANIFAGDLFRMYSRFSEEQGWKIEVMETNEADHGGFKEISFIIIGKGAYSKLKFENGAHRVQRIPTTESGGRIHTSTATVAVLPEVEDVEIEIRQEDLRIETYRSSGSGGQHVNTTDSAVRITHIPTGIVATSSEKSQIKNREKALKLLKTRVFDAKLQEEQAKYSEQRKSAVGTGDRSERIRTYNYPQNRVTDHRIGLTIQKLDQIVEGKLGEIIDALTIAEQTSKLEALNDGVL</sequence>
<evidence type="ECO:0000255" key="1">
    <source>
        <dbReference type="HAMAP-Rule" id="MF_00093"/>
    </source>
</evidence>
<organism>
    <name type="scientific">Macrococcus caseolyticus (strain JCSC5402)</name>
    <name type="common">Macrococcoides caseolyticum</name>
    <dbReference type="NCBI Taxonomy" id="458233"/>
    <lineage>
        <taxon>Bacteria</taxon>
        <taxon>Bacillati</taxon>
        <taxon>Bacillota</taxon>
        <taxon>Bacilli</taxon>
        <taxon>Bacillales</taxon>
        <taxon>Staphylococcaceae</taxon>
        <taxon>Macrococcoides</taxon>
    </lineage>
</organism>